<protein>
    <recommendedName>
        <fullName>Small EDRK-rich factor 1</fullName>
    </recommendedName>
    <alternativeName>
        <fullName>Protein 4F5</fullName>
        <shortName>h4F5</shortName>
    </alternativeName>
    <alternativeName>
        <fullName>SMA modifier 1</fullName>
    </alternativeName>
</protein>
<accession>O75920</accession>
<accession>B7ZKM2</accession>
<accession>O75919</accession>
<accession>Q52LK5</accession>
<proteinExistence type="evidence at protein level"/>
<reference key="1">
    <citation type="journal article" date="1998" name="Nat. Genet.">
        <title>Identification of a candidate modifying gene for spinal muscular atrophy by comparative genomics.</title>
        <authorList>
            <person name="Scharf J.M."/>
            <person name="Endrizzi M.G."/>
            <person name="Wetter A."/>
            <person name="Huang S."/>
            <person name="Thompson T.G."/>
            <person name="Zerres K."/>
            <person name="Dietrich W.F."/>
            <person name="Wirth B."/>
            <person name="Kunkel L.M."/>
        </authorList>
    </citation>
    <scope>NUCLEOTIDE SEQUENCE [MRNA] (ISOFORMS LONG AND SHORT)</scope>
    <scope>TISSUE SPECIFICITY</scope>
</reference>
<reference key="2">
    <citation type="journal article" date="2004" name="Genome Res.">
        <title>The status, quality, and expansion of the NIH full-length cDNA project: the Mammalian Gene Collection (MGC).</title>
        <authorList>
            <consortium name="The MGC Project Team"/>
        </authorList>
    </citation>
    <scope>NUCLEOTIDE SEQUENCE [LARGE SCALE MRNA] (ISOFORMS SHORT AND LONG)</scope>
    <source>
        <tissue>Brain</tissue>
        <tissue>Lung</tissue>
    </source>
</reference>
<reference key="3">
    <citation type="journal article" date="2010" name="Cell">
        <title>Identification of MOAG-4/SERF as a regulator of age-related proteotoxicity.</title>
        <authorList>
            <person name="van Ham T.J."/>
            <person name="Holmberg M.A."/>
            <person name="van der Goot A.T."/>
            <person name="Teuling E."/>
            <person name="Garcia-Arencibia M."/>
            <person name="Kim H.E."/>
            <person name="Du D."/>
            <person name="Thijssen K.L."/>
            <person name="Wiersma M."/>
            <person name="Burggraaff R."/>
            <person name="van Bergeijk P."/>
            <person name="van Rheenen J."/>
            <person name="Jerre van Veluw G."/>
            <person name="Hofstra R.M."/>
            <person name="Rubinsztein D.C."/>
            <person name="Nollen E.A."/>
        </authorList>
    </citation>
    <scope>FUNCTION</scope>
</reference>
<reference key="4">
    <citation type="journal article" date="2012" name="Cell Rep.">
        <title>SERF protein is a direct modifier of amyloid fiber assembly.</title>
        <authorList>
            <person name="Falsone S.F."/>
            <person name="Meyer N.H."/>
            <person name="Schrank E."/>
            <person name="Leitinger G."/>
            <person name="Pham C.L."/>
            <person name="Fodero-Tavoletti M.T."/>
            <person name="Holmberg M."/>
            <person name="Dulle M."/>
            <person name="Scicluna B."/>
            <person name="Gesslbauer B."/>
            <person name="Rueckert H.M."/>
            <person name="Wagner G.E."/>
            <person name="Merle D.A."/>
            <person name="Nollen E.A."/>
            <person name="Kungl A.J."/>
            <person name="Hill A.F."/>
            <person name="Cappai R."/>
            <person name="Zangger K."/>
        </authorList>
    </citation>
    <scope>FUNCTION</scope>
    <scope>INTERACTION WITH SNCA</scope>
</reference>
<reference key="5">
    <citation type="journal article" date="2019" name="J. Mol. Biol.">
        <title>Increased Aggregation Tendency of Alpha-Synuclein in a Fully Disordered Protein Complex.</title>
        <authorList>
            <person name="Merle D.A."/>
            <person name="Witternigg A."/>
            <person name="Tam-Amersdorfer C."/>
            <person name="Hartlmueller C."/>
            <person name="Spreitzer E."/>
            <person name="Schrank E."/>
            <person name="Wagner-Lichtenegger S."/>
            <person name="Werzer O."/>
            <person name="Zangger K."/>
            <person name="Kungl A.J."/>
            <person name="Madl T."/>
            <person name="Meyer N.H."/>
            <person name="Falsone S.F."/>
        </authorList>
    </citation>
    <scope>FUNCTION</scope>
    <scope>INTERACTION WITH SNCA</scope>
    <scope>SUBCELLULAR LOCATION</scope>
    <scope>MUTAGENESIS OF ARG-11; GLN-12; LYS-13; ASN-14; LYS-16; LYS-17 AND THR-18</scope>
</reference>
<evidence type="ECO:0000256" key="1">
    <source>
        <dbReference type="SAM" id="MobiDB-lite"/>
    </source>
</evidence>
<evidence type="ECO:0000269" key="2">
    <source>
    </source>
</evidence>
<evidence type="ECO:0000269" key="3">
    <source>
    </source>
</evidence>
<evidence type="ECO:0000269" key="4">
    <source>
    </source>
</evidence>
<evidence type="ECO:0000269" key="5">
    <source>
    </source>
</evidence>
<evidence type="ECO:0000303" key="6">
    <source>
    </source>
</evidence>
<evidence type="ECO:0000303" key="7">
    <source>
    </source>
</evidence>
<evidence type="ECO:0000305" key="8"/>
<organism>
    <name type="scientific">Homo sapiens</name>
    <name type="common">Human</name>
    <dbReference type="NCBI Taxonomy" id="9606"/>
    <lineage>
        <taxon>Eukaryota</taxon>
        <taxon>Metazoa</taxon>
        <taxon>Chordata</taxon>
        <taxon>Craniata</taxon>
        <taxon>Vertebrata</taxon>
        <taxon>Euteleostomi</taxon>
        <taxon>Mammalia</taxon>
        <taxon>Eutheria</taxon>
        <taxon>Euarchontoglires</taxon>
        <taxon>Primates</taxon>
        <taxon>Haplorrhini</taxon>
        <taxon>Catarrhini</taxon>
        <taxon>Hominidae</taxon>
        <taxon>Homo</taxon>
    </lineage>
</organism>
<sequence length="110" mass="12349">MARGNQRELARQKNMKKTQEISKGKRKEDSLTASQRKQSSGGQKSESKMSAGPHLPLKAPRENPCFPLPAAGGSRYYLAYGSITPISAFVFVVFFSVFFPSFYEDFCCWI</sequence>
<dbReference type="EMBL" id="AF073518">
    <property type="protein sequence ID" value="AAC63517.1"/>
    <property type="molecule type" value="mRNA"/>
</dbReference>
<dbReference type="EMBL" id="AF073519">
    <property type="protein sequence ID" value="AAC63518.1"/>
    <property type="molecule type" value="mRNA"/>
</dbReference>
<dbReference type="EMBL" id="BC021174">
    <property type="protein sequence ID" value="AAH21174.1"/>
    <property type="molecule type" value="mRNA"/>
</dbReference>
<dbReference type="EMBL" id="BC035932">
    <property type="protein sequence ID" value="AAH35932.1"/>
    <property type="molecule type" value="mRNA"/>
</dbReference>
<dbReference type="EMBL" id="BC093880">
    <property type="protein sequence ID" value="AAH93880.1"/>
    <property type="molecule type" value="mRNA"/>
</dbReference>
<dbReference type="EMBL" id="BC093882">
    <property type="protein sequence ID" value="AAH93882.1"/>
    <property type="molecule type" value="mRNA"/>
</dbReference>
<dbReference type="EMBL" id="BC101970">
    <property type="protein sequence ID" value="AAI01971.1"/>
    <property type="molecule type" value="mRNA"/>
</dbReference>
<dbReference type="EMBL" id="BC104738">
    <property type="protein sequence ID" value="AAI04739.1"/>
    <property type="molecule type" value="mRNA"/>
</dbReference>
<dbReference type="EMBL" id="BC103687">
    <property type="protein sequence ID" value="AAI03688.1"/>
    <property type="molecule type" value="mRNA"/>
</dbReference>
<dbReference type="EMBL" id="BC143255">
    <property type="protein sequence ID" value="AAI43256.1"/>
    <property type="molecule type" value="mRNA"/>
</dbReference>
<dbReference type="EMBL" id="BC143260">
    <property type="protein sequence ID" value="AAI43261.1"/>
    <property type="molecule type" value="mRNA"/>
</dbReference>
<dbReference type="EMBL" id="BC171749">
    <property type="protein sequence ID" value="AAI71749.1"/>
    <property type="molecule type" value="mRNA"/>
</dbReference>
<dbReference type="CCDS" id="CCDS43326.1">
    <molecule id="O75920-1"/>
</dbReference>
<dbReference type="CCDS" id="CCDS47228.1">
    <molecule id="O75920-1"/>
</dbReference>
<dbReference type="CCDS" id="CCDS47229.1">
    <molecule id="O75920-2"/>
</dbReference>
<dbReference type="CCDS" id="CCDS54866.1">
    <molecule id="O75920-2"/>
</dbReference>
<dbReference type="RefSeq" id="NP_001171558.1">
    <molecule id="O75920-2"/>
    <property type="nucleotide sequence ID" value="NM_001178087.1"/>
</dbReference>
<dbReference type="RefSeq" id="NP_068802.1">
    <molecule id="O75920-1"/>
    <property type="nucleotide sequence ID" value="NM_021967.4"/>
</dbReference>
<dbReference type="RefSeq" id="NP_075257.1">
    <molecule id="O75920-2"/>
    <property type="nucleotide sequence ID" value="NM_022968.2"/>
</dbReference>
<dbReference type="RefSeq" id="NP_075267.1">
    <molecule id="O75920-1"/>
    <property type="nucleotide sequence ID" value="NM_022978.2"/>
</dbReference>
<dbReference type="RefSeq" id="XP_047299261.1">
    <molecule id="O75920-1"/>
    <property type="nucleotide sequence ID" value="XM_047443305.1"/>
</dbReference>
<dbReference type="RefSeq" id="XP_047299262.1">
    <molecule id="O75920-2"/>
    <property type="nucleotide sequence ID" value="XM_047443306.1"/>
</dbReference>
<dbReference type="SASBDB" id="O75920"/>
<dbReference type="BioGRID" id="113898">
    <property type="interactions" value="28"/>
</dbReference>
<dbReference type="BioGRID" id="608917">
    <property type="interactions" value="12"/>
</dbReference>
<dbReference type="FunCoup" id="O75920">
    <property type="interactions" value="2"/>
</dbReference>
<dbReference type="IntAct" id="O75920">
    <property type="interactions" value="23"/>
</dbReference>
<dbReference type="MINT" id="O75920"/>
<dbReference type="STRING" id="9606.ENSP00000346892"/>
<dbReference type="GlyGen" id="O75920">
    <property type="glycosylation" value="3 sites, 1 O-linked glycan (3 sites)"/>
</dbReference>
<dbReference type="iPTMnet" id="O75920"/>
<dbReference type="PhosphoSitePlus" id="O75920"/>
<dbReference type="BioMuta" id="SERF1A"/>
<dbReference type="jPOST" id="O75920"/>
<dbReference type="MassIVE" id="O75920"/>
<dbReference type="PaxDb" id="9606-ENSP00000346892"/>
<dbReference type="PeptideAtlas" id="O75920"/>
<dbReference type="ProteomicsDB" id="50276">
    <molecule id="O75920-1"/>
</dbReference>
<dbReference type="ProteomicsDB" id="50277">
    <molecule id="O75920-2"/>
</dbReference>
<dbReference type="Pumba" id="O75920"/>
<dbReference type="TopDownProteomics" id="O75920-2">
    <molecule id="O75920-2"/>
</dbReference>
<dbReference type="Antibodypedia" id="24018">
    <property type="antibodies" value="12 antibodies from 6 providers"/>
</dbReference>
<dbReference type="Antibodypedia" id="67412">
    <property type="antibodies" value="126 antibodies from 9 providers"/>
</dbReference>
<dbReference type="DNASU" id="8293"/>
<dbReference type="Ensembl" id="ENST00000317633.14">
    <molecule id="O75920-2"/>
    <property type="protein sequence ID" value="ENSP00000321791.8"/>
    <property type="gene ID" value="ENSG00000172058.16"/>
</dbReference>
<dbReference type="Ensembl" id="ENST00000354833.7">
    <molecule id="O75920-1"/>
    <property type="protein sequence ID" value="ENSP00000346892.3"/>
    <property type="gene ID" value="ENSG00000172058.16"/>
</dbReference>
<dbReference type="Ensembl" id="ENST00000380750.8">
    <molecule id="O75920-1"/>
    <property type="protein sequence ID" value="ENSP00000370126.4"/>
    <property type="gene ID" value="ENSG00000205572.11"/>
</dbReference>
<dbReference type="Ensembl" id="ENST00000380751.10">
    <molecule id="O75920-2"/>
    <property type="protein sequence ID" value="ENSP00000370127.5"/>
    <property type="gene ID" value="ENSG00000205572.11"/>
</dbReference>
<dbReference type="Ensembl" id="ENST00000611616.4">
    <molecule id="O75920-2"/>
    <property type="protein sequence ID" value="ENSP00000482392.1"/>
    <property type="gene ID" value="ENSG00000278839.4"/>
</dbReference>
<dbReference type="Ensembl" id="ENST00000613172.4">
    <molecule id="O75920-1"/>
    <property type="protein sequence ID" value="ENSP00000484795.1"/>
    <property type="gene ID" value="ENSG00000277429.4"/>
</dbReference>
<dbReference type="Ensembl" id="ENST00000614527.4">
    <molecule id="O75920-1"/>
    <property type="protein sequence ID" value="ENSP00000479724.1"/>
    <property type="gene ID" value="ENSG00000275581.4"/>
</dbReference>
<dbReference type="Ensembl" id="ENST00000621283.3">
    <molecule id="O75920-2"/>
    <property type="protein sequence ID" value="ENSP00000481118.1"/>
    <property type="gene ID" value="ENSG00000277429.4"/>
</dbReference>
<dbReference type="Ensembl" id="ENST00000622553.4">
    <molecule id="O75920-1"/>
    <property type="protein sequence ID" value="ENSP00000480543.1"/>
    <property type="gene ID" value="ENSG00000278839.4"/>
</dbReference>
<dbReference type="Ensembl" id="ENST00000627372.2">
    <molecule id="O75920-2"/>
    <property type="protein sequence ID" value="ENSP00000487374.1"/>
    <property type="gene ID" value="ENSG00000275581.4"/>
</dbReference>
<dbReference type="Ensembl" id="ENST00000630567.1">
    <molecule id="O75920-1"/>
    <property type="protein sequence ID" value="ENSP00000487531.1"/>
    <property type="gene ID" value="ENSG00000275581.4"/>
</dbReference>
<dbReference type="GeneID" id="728492"/>
<dbReference type="GeneID" id="8293"/>
<dbReference type="KEGG" id="hsa:728492"/>
<dbReference type="KEGG" id="hsa:8293"/>
<dbReference type="MANE-Select" id="ENST00000317633.14">
    <molecule id="O75920-2"/>
    <property type="protein sequence ID" value="ENSP00000321791.8"/>
    <property type="RefSeq nucleotide sequence ID" value="NM_022968.2"/>
    <property type="RefSeq protein sequence ID" value="NP_075257.1"/>
</dbReference>
<dbReference type="MANE-Select" id="ENST00000380750.8">
    <property type="protein sequence ID" value="ENSP00000370126.4"/>
    <property type="RefSeq nucleotide sequence ID" value="NM_022978.3"/>
    <property type="RefSeq protein sequence ID" value="NP_075267.1"/>
</dbReference>
<dbReference type="UCSC" id="uc003jxz.4">
    <molecule id="O75920-1"/>
    <property type="organism name" value="human"/>
</dbReference>
<dbReference type="AGR" id="HGNC:10755"/>
<dbReference type="AGR" id="HGNC:10756"/>
<dbReference type="CTD" id="728492"/>
<dbReference type="CTD" id="8293"/>
<dbReference type="DisGeNET" id="728492"/>
<dbReference type="DisGeNET" id="8293"/>
<dbReference type="GeneCards" id="SERF1A"/>
<dbReference type="GeneCards" id="SERF1B"/>
<dbReference type="HGNC" id="HGNC:10755">
    <property type="gene designation" value="SERF1A"/>
</dbReference>
<dbReference type="HGNC" id="HGNC:10756">
    <property type="gene designation" value="SERF1B"/>
</dbReference>
<dbReference type="HPA" id="ENSG00000172058">
    <property type="expression patterns" value="Tissue enhanced (retina, testis)"/>
</dbReference>
<dbReference type="HPA" id="ENSG00000205572">
    <property type="expression patterns" value="Tissue enhanced (testis)"/>
</dbReference>
<dbReference type="MIM" id="603011">
    <property type="type" value="gene"/>
</dbReference>
<dbReference type="neXtProt" id="NX_O75920"/>
<dbReference type="OpenTargets" id="ENSG00000172058"/>
<dbReference type="OpenTargets" id="ENSG00000205572"/>
<dbReference type="PharmGKB" id="PA35675"/>
<dbReference type="VEuPathDB" id="HostDB:ENSG00000172058"/>
<dbReference type="VEuPathDB" id="HostDB:ENSG00000205572"/>
<dbReference type="eggNOG" id="KOG4488">
    <property type="taxonomic scope" value="Eukaryota"/>
</dbReference>
<dbReference type="GeneTree" id="ENSGT00940000161793"/>
<dbReference type="HOGENOM" id="CLU_165034_1_1_1"/>
<dbReference type="InParanoid" id="O75920"/>
<dbReference type="OMA" id="NRDADIM"/>
<dbReference type="OrthoDB" id="18018at2759"/>
<dbReference type="PAN-GO" id="O75920">
    <property type="GO annotations" value="0 GO annotations based on evolutionary models"/>
</dbReference>
<dbReference type="PhylomeDB" id="O75920"/>
<dbReference type="PathwayCommons" id="O75920"/>
<dbReference type="SignaLink" id="O75920"/>
<dbReference type="BioGRID-ORCS" id="728492">
    <property type="hits" value="7 hits in 131 CRISPR screens"/>
</dbReference>
<dbReference type="BioGRID-ORCS" id="8293">
    <property type="hits" value="14 hits in 662 CRISPR screens"/>
</dbReference>
<dbReference type="ChiTaRS" id="SERF1B">
    <property type="organism name" value="human"/>
</dbReference>
<dbReference type="Pharos" id="O75920">
    <property type="development level" value="Tdark"/>
</dbReference>
<dbReference type="PRO" id="PR:O75920"/>
<dbReference type="Proteomes" id="UP000005640">
    <property type="component" value="Chromosome 5"/>
</dbReference>
<dbReference type="RNAct" id="O75920">
    <property type="molecule type" value="protein"/>
</dbReference>
<dbReference type="Bgee" id="ENSG00000172058">
    <property type="expression patterns" value="Expressed in left testis and 98 other cell types or tissues"/>
</dbReference>
<dbReference type="ExpressionAtlas" id="O75920">
    <property type="expression patterns" value="baseline and differential"/>
</dbReference>
<dbReference type="GO" id="GO:0005829">
    <property type="term" value="C:cytosol"/>
    <property type="evidence" value="ECO:0000315"/>
    <property type="project" value="UniProtKB"/>
</dbReference>
<dbReference type="GO" id="GO:0005634">
    <property type="term" value="C:nucleus"/>
    <property type="evidence" value="ECO:0000315"/>
    <property type="project" value="UniProtKB"/>
</dbReference>
<dbReference type="GO" id="GO:0032991">
    <property type="term" value="C:protein-containing complex"/>
    <property type="evidence" value="ECO:0000315"/>
    <property type="project" value="UniProtKB"/>
</dbReference>
<dbReference type="GO" id="GO:1990000">
    <property type="term" value="P:amyloid fibril formation"/>
    <property type="evidence" value="ECO:0000315"/>
    <property type="project" value="UniProtKB"/>
</dbReference>
<dbReference type="GO" id="GO:0007399">
    <property type="term" value="P:nervous system development"/>
    <property type="evidence" value="ECO:0000304"/>
    <property type="project" value="ProtInc"/>
</dbReference>
<dbReference type="GO" id="GO:0031648">
    <property type="term" value="P:protein destabilization"/>
    <property type="evidence" value="ECO:0000315"/>
    <property type="project" value="UniProtKB"/>
</dbReference>
<dbReference type="InterPro" id="IPR007513">
    <property type="entry name" value="SERF-like_N"/>
</dbReference>
<dbReference type="InterPro" id="IPR040211">
    <property type="entry name" value="SERF1/2-like"/>
</dbReference>
<dbReference type="PANTHER" id="PTHR13596">
    <property type="entry name" value="SMALL EDRK-RICH FACTOR 1"/>
    <property type="match status" value="1"/>
</dbReference>
<dbReference type="PANTHER" id="PTHR13596:SF1">
    <property type="entry name" value="SMALL EDRK-RICH FACTOR 1"/>
    <property type="match status" value="1"/>
</dbReference>
<dbReference type="Pfam" id="PF04419">
    <property type="entry name" value="SERF-like_N"/>
    <property type="match status" value="1"/>
</dbReference>
<keyword id="KW-0025">Alternative splicing</keyword>
<keyword id="KW-0963">Cytoplasm</keyword>
<keyword id="KW-0539">Nucleus</keyword>
<keyword id="KW-1267">Proteomics identification</keyword>
<keyword id="KW-1185">Reference proteome</keyword>
<comment type="function">
    <text evidence="2 3 4">Positive regulator of amyloid protein aggregation and proteotoxicity (PubMed:20723760, PubMed:22854022, PubMed:31034892). Induces conformational changes in amyloid proteins, such as APP, HTT, and SNCA, driving them into compact formations preceding the formation of aggregates (PubMed:20723760, PubMed:22854022, PubMed:31034892).</text>
</comment>
<comment type="subunit">
    <text evidence="3 4">Interacts with SNCA; this interaction promotes the aggregation of SNCA.</text>
</comment>
<comment type="interaction">
    <interactant intactId="EBI-2115181">
        <id>O75920</id>
    </interactant>
    <interactant intactId="EBI-348517">
        <id>O95870</id>
        <label>ABHD16A</label>
    </interactant>
    <organismsDiffer>false</organismsDiffer>
    <experiments>3</experiments>
</comment>
<comment type="interaction">
    <interactant intactId="EBI-2115181">
        <id>O75920</id>
    </interactant>
    <interactant intactId="EBI-13059134">
        <id>Q13520</id>
        <label>AQP6</label>
    </interactant>
    <organismsDiffer>false</organismsDiffer>
    <experiments>3</experiments>
</comment>
<comment type="interaction">
    <interactant intactId="EBI-2115181">
        <id>O75920</id>
    </interactant>
    <interactant intactId="EBI-2622997">
        <id>Q9HA82</id>
        <label>CERS4</label>
    </interactant>
    <organismsDiffer>false</organismsDiffer>
    <experiments>3</experiments>
</comment>
<comment type="interaction">
    <interactant intactId="EBI-2115181">
        <id>O75920</id>
    </interactant>
    <interactant intactId="EBI-17233035">
        <id>Q9BUF7-2</id>
        <label>CRB3</label>
    </interactant>
    <organismsDiffer>false</organismsDiffer>
    <experiments>3</experiments>
</comment>
<comment type="interaction">
    <interactant intactId="EBI-2115181">
        <id>O75920</id>
    </interactant>
    <interactant intactId="EBI-18535450">
        <id>Q9GZR5</id>
        <label>ELOVL4</label>
    </interactant>
    <organismsDiffer>false</organismsDiffer>
    <experiments>3</experiments>
</comment>
<comment type="interaction">
    <interactant intactId="EBI-2115181">
        <id>O75920</id>
    </interactant>
    <interactant intactId="EBI-10285373">
        <id>A1L3X0</id>
        <label>ELOVL7</label>
    </interactant>
    <organismsDiffer>false</organismsDiffer>
    <experiments>3</experiments>
</comment>
<comment type="interaction">
    <interactant intactId="EBI-2115181">
        <id>O75920</id>
    </interactant>
    <interactant intactId="EBI-13345167">
        <id>Q8TDT2</id>
        <label>GPR152</label>
    </interactant>
    <organismsDiffer>false</organismsDiffer>
    <experiments>3</experiments>
</comment>
<comment type="interaction">
    <interactant intactId="EBI-2115181">
        <id>O75920</id>
    </interactant>
    <interactant intactId="EBI-7545592">
        <id>Q9H6H4</id>
        <label>REEP4</label>
    </interactant>
    <organismsDiffer>false</organismsDiffer>
    <experiments>3</experiments>
</comment>
<comment type="interaction">
    <interactant intactId="EBI-2115181">
        <id>O75920</id>
    </interactant>
    <interactant intactId="EBI-18397230">
        <id>Q6P5S7</id>
        <label>RNASEK</label>
    </interactant>
    <organismsDiffer>false</organismsDiffer>
    <experiments>3</experiments>
</comment>
<comment type="interaction">
    <interactant intactId="EBI-2115181">
        <id>O75920</id>
    </interactant>
    <interactant intactId="EBI-6268651">
        <id>Q9NPL8</id>
        <label>TIMMDC1</label>
    </interactant>
    <organismsDiffer>false</organismsDiffer>
    <experiments>3</experiments>
</comment>
<comment type="interaction">
    <interactant intactId="EBI-2115181">
        <id>O75920</id>
    </interactant>
    <interactant intactId="EBI-8638294">
        <id>Q9NUH8</id>
        <label>TMEM14B</label>
    </interactant>
    <organismsDiffer>false</organismsDiffer>
    <experiments>3</experiments>
</comment>
<comment type="interaction">
    <interactant intactId="EBI-2115181">
        <id>O75920</id>
    </interactant>
    <interactant intactId="EBI-6447886">
        <id>Q9Y320</id>
        <label>TMX2</label>
    </interactant>
    <organismsDiffer>false</organismsDiffer>
    <experiments>3</experiments>
</comment>
<comment type="interaction">
    <interactant intactId="EBI-21283682">
        <id>O75920-2</id>
    </interactant>
    <interactant intactId="EBI-985879">
        <id>P37840</id>
        <label>SNCA</label>
    </interactant>
    <organismsDiffer>false</organismsDiffer>
    <experiments>4</experiments>
</comment>
<comment type="subcellular location">
    <subcellularLocation>
        <location evidence="4">Cytoplasm</location>
        <location evidence="4">Cytosol</location>
    </subcellularLocation>
    <subcellularLocation>
        <location evidence="4">Nucleus</location>
    </subcellularLocation>
</comment>
<comment type="alternative products">
    <event type="alternative splicing"/>
    <isoform>
        <id>O75920-1</id>
        <name>Long</name>
        <sequence type="displayed"/>
    </isoform>
    <isoform>
        <id>O75920-2</id>
        <name>Short</name>
        <sequence type="described" ref="VSP_006057"/>
    </isoform>
</comment>
<comment type="tissue specificity">
    <text evidence="5">Isoform Long is predominantly expressed in heart, brain and skeletal muscle. Isoform Short and Isoform Long are expressed throughout the central nervous system, including spinal cord.</text>
</comment>
<comment type="similarity">
    <text evidence="8">Belongs to the SERF family.</text>
</comment>
<gene>
    <name type="primary">SERF1A</name>
    <name type="synonym">FAM2A</name>
    <name type="synonym">SERF1</name>
    <name type="synonym">SMAM1</name>
</gene>
<gene>
    <name type="primary">SERF1B</name>
    <name type="synonym">FAM2B</name>
    <name type="synonym">SERF1</name>
    <name type="synonym">SMAM1</name>
</gene>
<feature type="chain" id="PRO_0000050710" description="Small EDRK-rich factor 1">
    <location>
        <begin position="1"/>
        <end position="110"/>
    </location>
</feature>
<feature type="region of interest" description="Disordered" evidence="1">
    <location>
        <begin position="1"/>
        <end position="61"/>
    </location>
</feature>
<feature type="region of interest" description="Required for SNCA binding" evidence="4">
    <location>
        <begin position="11"/>
        <end position="17"/>
    </location>
</feature>
<feature type="compositionally biased region" description="Basic and acidic residues" evidence="1">
    <location>
        <begin position="1"/>
        <end position="30"/>
    </location>
</feature>
<feature type="compositionally biased region" description="Low complexity" evidence="1">
    <location>
        <begin position="34"/>
        <end position="50"/>
    </location>
</feature>
<feature type="splice variant" id="VSP_006057" description="In isoform Short." evidence="6 7">
    <original>SSGGQKSESKMSAGPHLPLKAPRENPCFPLPAAGGSRYYLAYGSITPISAFVFVVFFSVFFPSFYEDFCCWI</original>
    <variation>RDSEIMQEKQKAANEKKSMQTREK</variation>
    <location>
        <begin position="39"/>
        <end position="110"/>
    </location>
</feature>
<feature type="mutagenesis site" description="No effect on SNCA binding." evidence="4">
    <original>R</original>
    <variation>A</variation>
    <location>
        <position position="11"/>
    </location>
</feature>
<feature type="mutagenesis site" description="Decreases SNCA binding." evidence="4">
    <original>R</original>
    <variation>E</variation>
    <location>
        <position position="11"/>
    </location>
</feature>
<feature type="mutagenesis site" description="Slightly decreases SNCA binding." evidence="4">
    <original>Q</original>
    <variation>A</variation>
    <location>
        <position position="12"/>
    </location>
</feature>
<feature type="mutagenesis site" description="Decreases SNCA binding." evidence="4">
    <original>K</original>
    <variation>A</variation>
    <location>
        <position position="13"/>
    </location>
</feature>
<feature type="mutagenesis site" description="Inhibits SNCA binding." evidence="4">
    <original>K</original>
    <variation>E</variation>
    <location>
        <position position="13"/>
    </location>
</feature>
<feature type="mutagenesis site" description="Decreases SNCA binding." evidence="4">
    <original>N</original>
    <variation>A</variation>
    <location>
        <position position="14"/>
    </location>
</feature>
<feature type="mutagenesis site" description="Drastically decreases SNCA binding." evidence="4">
    <original>K</original>
    <variation>A</variation>
    <location>
        <position position="16"/>
    </location>
</feature>
<feature type="mutagenesis site" description="Inhibits SNCA binding." evidence="4">
    <original>K</original>
    <variation>E</variation>
    <location>
        <position position="16"/>
    </location>
</feature>
<feature type="mutagenesis site" description="Drastically decreases SNCA binding." evidence="4">
    <original>K</original>
    <variation>A</variation>
    <location>
        <position position="17"/>
    </location>
</feature>
<feature type="mutagenesis site" description="Inhibits SNCA binding." evidence="4">
    <original>K</original>
    <variation>E</variation>
    <location>
        <position position="17"/>
    </location>
</feature>
<feature type="mutagenesis site" description="No effect on SNCA binding." evidence="4">
    <original>T</original>
    <variation>A</variation>
    <location>
        <position position="18"/>
    </location>
</feature>
<name>SERF1_HUMAN</name>